<name>ISPE_SYNWW</name>
<accession>Q0B0T2</accession>
<reference key="1">
    <citation type="journal article" date="2010" name="Environ. Microbiol.">
        <title>The genome of Syntrophomonas wolfei: new insights into syntrophic metabolism and biohydrogen production.</title>
        <authorList>
            <person name="Sieber J.R."/>
            <person name="Sims D.R."/>
            <person name="Han C."/>
            <person name="Kim E."/>
            <person name="Lykidis A."/>
            <person name="Lapidus A.L."/>
            <person name="McDonnald E."/>
            <person name="Rohlin L."/>
            <person name="Culley D.E."/>
            <person name="Gunsalus R."/>
            <person name="McInerney M.J."/>
        </authorList>
    </citation>
    <scope>NUCLEOTIDE SEQUENCE [LARGE SCALE GENOMIC DNA]</scope>
    <source>
        <strain>DSM 2245B / Goettingen</strain>
    </source>
</reference>
<dbReference type="EC" id="2.7.1.148" evidence="1"/>
<dbReference type="EMBL" id="CP000448">
    <property type="protein sequence ID" value="ABI67422.1"/>
    <property type="molecule type" value="Genomic_DNA"/>
</dbReference>
<dbReference type="RefSeq" id="WP_011639533.1">
    <property type="nucleotide sequence ID" value="NC_008346.1"/>
</dbReference>
<dbReference type="SMR" id="Q0B0T2"/>
<dbReference type="STRING" id="335541.Swol_0064"/>
<dbReference type="KEGG" id="swo:Swol_0064"/>
<dbReference type="eggNOG" id="COG1947">
    <property type="taxonomic scope" value="Bacteria"/>
</dbReference>
<dbReference type="HOGENOM" id="CLU_053057_1_1_9"/>
<dbReference type="OrthoDB" id="9809438at2"/>
<dbReference type="UniPathway" id="UPA00056">
    <property type="reaction ID" value="UER00094"/>
</dbReference>
<dbReference type="Proteomes" id="UP000001968">
    <property type="component" value="Chromosome"/>
</dbReference>
<dbReference type="GO" id="GO:0050515">
    <property type="term" value="F:4-(cytidine 5'-diphospho)-2-C-methyl-D-erythritol kinase activity"/>
    <property type="evidence" value="ECO:0007669"/>
    <property type="project" value="UniProtKB-UniRule"/>
</dbReference>
<dbReference type="GO" id="GO:0005524">
    <property type="term" value="F:ATP binding"/>
    <property type="evidence" value="ECO:0007669"/>
    <property type="project" value="UniProtKB-UniRule"/>
</dbReference>
<dbReference type="GO" id="GO:0019288">
    <property type="term" value="P:isopentenyl diphosphate biosynthetic process, methylerythritol 4-phosphate pathway"/>
    <property type="evidence" value="ECO:0007669"/>
    <property type="project" value="UniProtKB-UniRule"/>
</dbReference>
<dbReference type="GO" id="GO:0016114">
    <property type="term" value="P:terpenoid biosynthetic process"/>
    <property type="evidence" value="ECO:0007669"/>
    <property type="project" value="InterPro"/>
</dbReference>
<dbReference type="Gene3D" id="3.30.230.10">
    <property type="match status" value="1"/>
</dbReference>
<dbReference type="Gene3D" id="3.30.70.890">
    <property type="entry name" value="GHMP kinase, C-terminal domain"/>
    <property type="match status" value="1"/>
</dbReference>
<dbReference type="HAMAP" id="MF_00061">
    <property type="entry name" value="IspE"/>
    <property type="match status" value="1"/>
</dbReference>
<dbReference type="InterPro" id="IPR013750">
    <property type="entry name" value="GHMP_kinase_C_dom"/>
</dbReference>
<dbReference type="InterPro" id="IPR036554">
    <property type="entry name" value="GHMP_kinase_C_sf"/>
</dbReference>
<dbReference type="InterPro" id="IPR006204">
    <property type="entry name" value="GHMP_kinase_N_dom"/>
</dbReference>
<dbReference type="InterPro" id="IPR004424">
    <property type="entry name" value="IspE"/>
</dbReference>
<dbReference type="InterPro" id="IPR020568">
    <property type="entry name" value="Ribosomal_Su5_D2-typ_SF"/>
</dbReference>
<dbReference type="InterPro" id="IPR014721">
    <property type="entry name" value="Ribsml_uS5_D2-typ_fold_subgr"/>
</dbReference>
<dbReference type="NCBIfam" id="TIGR00154">
    <property type="entry name" value="ispE"/>
    <property type="match status" value="1"/>
</dbReference>
<dbReference type="PANTHER" id="PTHR43527">
    <property type="entry name" value="4-DIPHOSPHOCYTIDYL-2-C-METHYL-D-ERYTHRITOL KINASE, CHLOROPLASTIC"/>
    <property type="match status" value="1"/>
</dbReference>
<dbReference type="PANTHER" id="PTHR43527:SF2">
    <property type="entry name" value="4-DIPHOSPHOCYTIDYL-2-C-METHYL-D-ERYTHRITOL KINASE, CHLOROPLASTIC"/>
    <property type="match status" value="1"/>
</dbReference>
<dbReference type="Pfam" id="PF08544">
    <property type="entry name" value="GHMP_kinases_C"/>
    <property type="match status" value="1"/>
</dbReference>
<dbReference type="Pfam" id="PF00288">
    <property type="entry name" value="GHMP_kinases_N"/>
    <property type="match status" value="1"/>
</dbReference>
<dbReference type="PIRSF" id="PIRSF010376">
    <property type="entry name" value="IspE"/>
    <property type="match status" value="1"/>
</dbReference>
<dbReference type="PRINTS" id="PR00958">
    <property type="entry name" value="HOMSERKINASE"/>
</dbReference>
<dbReference type="SUPFAM" id="SSF55060">
    <property type="entry name" value="GHMP Kinase, C-terminal domain"/>
    <property type="match status" value="1"/>
</dbReference>
<dbReference type="SUPFAM" id="SSF54211">
    <property type="entry name" value="Ribosomal protein S5 domain 2-like"/>
    <property type="match status" value="1"/>
</dbReference>
<protein>
    <recommendedName>
        <fullName evidence="1">4-diphosphocytidyl-2-C-methyl-D-erythritol kinase</fullName>
        <shortName evidence="1">CMK</shortName>
        <ecNumber evidence="1">2.7.1.148</ecNumber>
    </recommendedName>
    <alternativeName>
        <fullName evidence="1">4-(cytidine-5'-diphospho)-2-C-methyl-D-erythritol kinase</fullName>
    </alternativeName>
</protein>
<comment type="function">
    <text evidence="1">Catalyzes the phosphorylation of the position 2 hydroxy group of 4-diphosphocytidyl-2C-methyl-D-erythritol.</text>
</comment>
<comment type="catalytic activity">
    <reaction evidence="1">
        <text>4-CDP-2-C-methyl-D-erythritol + ATP = 4-CDP-2-C-methyl-D-erythritol 2-phosphate + ADP + H(+)</text>
        <dbReference type="Rhea" id="RHEA:18437"/>
        <dbReference type="ChEBI" id="CHEBI:15378"/>
        <dbReference type="ChEBI" id="CHEBI:30616"/>
        <dbReference type="ChEBI" id="CHEBI:57823"/>
        <dbReference type="ChEBI" id="CHEBI:57919"/>
        <dbReference type="ChEBI" id="CHEBI:456216"/>
        <dbReference type="EC" id="2.7.1.148"/>
    </reaction>
</comment>
<comment type="pathway">
    <text evidence="1">Isoprenoid biosynthesis; isopentenyl diphosphate biosynthesis via DXP pathway; isopentenyl diphosphate from 1-deoxy-D-xylulose 5-phosphate: step 3/6.</text>
</comment>
<comment type="similarity">
    <text evidence="1">Belongs to the GHMP kinase family. IspE subfamily.</text>
</comment>
<keyword id="KW-0067">ATP-binding</keyword>
<keyword id="KW-0414">Isoprene biosynthesis</keyword>
<keyword id="KW-0418">Kinase</keyword>
<keyword id="KW-0547">Nucleotide-binding</keyword>
<keyword id="KW-1185">Reference proteome</keyword>
<keyword id="KW-0808">Transferase</keyword>
<gene>
    <name evidence="1" type="primary">ispE</name>
    <name type="ordered locus">Swol_0064</name>
</gene>
<organism>
    <name type="scientific">Syntrophomonas wolfei subsp. wolfei (strain DSM 2245B / Goettingen)</name>
    <dbReference type="NCBI Taxonomy" id="335541"/>
    <lineage>
        <taxon>Bacteria</taxon>
        <taxon>Bacillati</taxon>
        <taxon>Bacillota</taxon>
        <taxon>Clostridia</taxon>
        <taxon>Eubacteriales</taxon>
        <taxon>Syntrophomonadaceae</taxon>
        <taxon>Syntrophomonas</taxon>
    </lineage>
</organism>
<evidence type="ECO:0000255" key="1">
    <source>
        <dbReference type="HAMAP-Rule" id="MF_00061"/>
    </source>
</evidence>
<feature type="chain" id="PRO_0000335766" description="4-diphosphocytidyl-2-C-methyl-D-erythritol kinase">
    <location>
        <begin position="1"/>
        <end position="285"/>
    </location>
</feature>
<feature type="active site" evidence="1">
    <location>
        <position position="12"/>
    </location>
</feature>
<feature type="active site" evidence="1">
    <location>
        <position position="137"/>
    </location>
</feature>
<feature type="binding site" evidence="1">
    <location>
        <begin position="95"/>
        <end position="105"/>
    </location>
    <ligand>
        <name>ATP</name>
        <dbReference type="ChEBI" id="CHEBI:30616"/>
    </ligand>
</feature>
<proteinExistence type="inferred from homology"/>
<sequence length="285" mass="31294">MRRNIILKAPAKVNLTLDVKGKRSDGYHELETVMHQVNLLDIIIISQAAGGIQIKSNSSLIPTNEENLAYQAAEMILGEYAHKEGVEIYIEKNIPVGAGLAGGSTDAAAVILGINQLYDLGLEEEELLEMAASIGSDVAFCLAGGSKLARGRGEILSKLPQRMIPYIILVKPDFQLSTAEVYRELDLTQVEEFPDNAAFLAAWEAYDIINIARNMRNVLETVSIRKYPEIAAIKAELIETGALNALMSGSGPSVMGIFMEEEQALKAREKFQTRYQEVFLLSSYV</sequence>